<organism>
    <name type="scientific">Buchnera aphidicola subsp. Acyrthosiphon pisum (strain 5A)</name>
    <dbReference type="NCBI Taxonomy" id="563178"/>
    <lineage>
        <taxon>Bacteria</taxon>
        <taxon>Pseudomonadati</taxon>
        <taxon>Pseudomonadota</taxon>
        <taxon>Gammaproteobacteria</taxon>
        <taxon>Enterobacterales</taxon>
        <taxon>Erwiniaceae</taxon>
        <taxon>Buchnera</taxon>
    </lineage>
</organism>
<gene>
    <name evidence="1" type="primary">rpmJ</name>
    <name type="ordered locus">BUAP5A_496</name>
</gene>
<keyword id="KW-0687">Ribonucleoprotein</keyword>
<keyword id="KW-0689">Ribosomal protein</keyword>
<reference key="1">
    <citation type="journal article" date="2009" name="Science">
        <title>The dynamics and time scale of ongoing genomic erosion in symbiotic bacteria.</title>
        <authorList>
            <person name="Moran N.A."/>
            <person name="McLaughlin H.J."/>
            <person name="Sorek R."/>
        </authorList>
    </citation>
    <scope>NUCLEOTIDE SEQUENCE [LARGE SCALE GENOMIC DNA]</scope>
    <source>
        <strain>5A</strain>
    </source>
</reference>
<protein>
    <recommendedName>
        <fullName evidence="1">Large ribosomal subunit protein bL36</fullName>
    </recommendedName>
    <alternativeName>
        <fullName evidence="2">50S ribosomal protein L36</fullName>
    </alternativeName>
</protein>
<sequence length="38" mass="4365">MKVQASVKVLCRSCKIIKRNNVVRVICSNDPKHKQRQG</sequence>
<proteinExistence type="inferred from homology"/>
<name>RL36_BUCA5</name>
<evidence type="ECO:0000255" key="1">
    <source>
        <dbReference type="HAMAP-Rule" id="MF_00251"/>
    </source>
</evidence>
<evidence type="ECO:0000305" key="2"/>
<accession>B8D9S6</accession>
<feature type="chain" id="PRO_1000196172" description="Large ribosomal subunit protein bL36">
    <location>
        <begin position="1"/>
        <end position="38"/>
    </location>
</feature>
<comment type="similarity">
    <text evidence="1">Belongs to the bacterial ribosomal protein bL36 family.</text>
</comment>
<dbReference type="EMBL" id="CP001161">
    <property type="protein sequence ID" value="ACL30847.1"/>
    <property type="molecule type" value="Genomic_DNA"/>
</dbReference>
<dbReference type="RefSeq" id="WP_009874454.1">
    <property type="nucleotide sequence ID" value="NC_011833.1"/>
</dbReference>
<dbReference type="SMR" id="B8D9S6"/>
<dbReference type="KEGG" id="bap:BUAP5A_496"/>
<dbReference type="HOGENOM" id="CLU_135723_6_2_6"/>
<dbReference type="OrthoDB" id="9802520at2"/>
<dbReference type="Proteomes" id="UP000006904">
    <property type="component" value="Chromosome"/>
</dbReference>
<dbReference type="GO" id="GO:0005737">
    <property type="term" value="C:cytoplasm"/>
    <property type="evidence" value="ECO:0007669"/>
    <property type="project" value="UniProtKB-ARBA"/>
</dbReference>
<dbReference type="GO" id="GO:1990904">
    <property type="term" value="C:ribonucleoprotein complex"/>
    <property type="evidence" value="ECO:0007669"/>
    <property type="project" value="UniProtKB-KW"/>
</dbReference>
<dbReference type="GO" id="GO:0005840">
    <property type="term" value="C:ribosome"/>
    <property type="evidence" value="ECO:0007669"/>
    <property type="project" value="UniProtKB-KW"/>
</dbReference>
<dbReference type="GO" id="GO:0003735">
    <property type="term" value="F:structural constituent of ribosome"/>
    <property type="evidence" value="ECO:0007669"/>
    <property type="project" value="InterPro"/>
</dbReference>
<dbReference type="GO" id="GO:0006412">
    <property type="term" value="P:translation"/>
    <property type="evidence" value="ECO:0007669"/>
    <property type="project" value="UniProtKB-UniRule"/>
</dbReference>
<dbReference type="HAMAP" id="MF_00251">
    <property type="entry name" value="Ribosomal_bL36"/>
    <property type="match status" value="1"/>
</dbReference>
<dbReference type="InterPro" id="IPR000473">
    <property type="entry name" value="Ribosomal_bL36"/>
</dbReference>
<dbReference type="InterPro" id="IPR035977">
    <property type="entry name" value="Ribosomal_bL36_sp"/>
</dbReference>
<dbReference type="NCBIfam" id="TIGR01022">
    <property type="entry name" value="rpmJ_bact"/>
    <property type="match status" value="1"/>
</dbReference>
<dbReference type="PANTHER" id="PTHR42888">
    <property type="entry name" value="50S RIBOSOMAL PROTEIN L36, CHLOROPLASTIC"/>
    <property type="match status" value="1"/>
</dbReference>
<dbReference type="PANTHER" id="PTHR42888:SF1">
    <property type="entry name" value="LARGE RIBOSOMAL SUBUNIT PROTEIN BL36C"/>
    <property type="match status" value="1"/>
</dbReference>
<dbReference type="Pfam" id="PF00444">
    <property type="entry name" value="Ribosomal_L36"/>
    <property type="match status" value="1"/>
</dbReference>
<dbReference type="SUPFAM" id="SSF57840">
    <property type="entry name" value="Ribosomal protein L36"/>
    <property type="match status" value="1"/>
</dbReference>
<dbReference type="PROSITE" id="PS00828">
    <property type="entry name" value="RIBOSOMAL_L36"/>
    <property type="match status" value="1"/>
</dbReference>